<accession>Q47J90</accession>
<comment type="function">
    <text evidence="1">Binds 16S rRNA, required for the assembly of 30S particles and may also be responsible for determining the conformation of the 16S rRNA at the A site.</text>
</comment>
<comment type="subunit">
    <text evidence="1">Part of the 30S ribosomal subunit. Contacts proteins S3 and S10.</text>
</comment>
<comment type="similarity">
    <text evidence="1">Belongs to the universal ribosomal protein uS14 family.</text>
</comment>
<protein>
    <recommendedName>
        <fullName evidence="1">Small ribosomal subunit protein uS14</fullName>
    </recommendedName>
    <alternativeName>
        <fullName evidence="2">30S ribosomal protein S14</fullName>
    </alternativeName>
</protein>
<evidence type="ECO:0000255" key="1">
    <source>
        <dbReference type="HAMAP-Rule" id="MF_00537"/>
    </source>
</evidence>
<evidence type="ECO:0000305" key="2"/>
<feature type="chain" id="PRO_0000269044" description="Small ribosomal subunit protein uS14">
    <location>
        <begin position="1"/>
        <end position="101"/>
    </location>
</feature>
<organism>
    <name type="scientific">Dechloromonas aromatica (strain RCB)</name>
    <dbReference type="NCBI Taxonomy" id="159087"/>
    <lineage>
        <taxon>Bacteria</taxon>
        <taxon>Pseudomonadati</taxon>
        <taxon>Pseudomonadota</taxon>
        <taxon>Betaproteobacteria</taxon>
        <taxon>Rhodocyclales</taxon>
        <taxon>Azonexaceae</taxon>
        <taxon>Dechloromonas</taxon>
    </lineage>
</organism>
<keyword id="KW-0687">Ribonucleoprotein</keyword>
<keyword id="KW-0689">Ribosomal protein</keyword>
<keyword id="KW-0694">RNA-binding</keyword>
<keyword id="KW-0699">rRNA-binding</keyword>
<gene>
    <name evidence="1" type="primary">rpsN</name>
    <name type="ordered locus">Daro_0332</name>
</gene>
<reference key="1">
    <citation type="journal article" date="2009" name="BMC Genomics">
        <title>Metabolic analysis of the soil microbe Dechloromonas aromatica str. RCB: indications of a surprisingly complex life-style and cryptic anaerobic pathways for aromatic degradation.</title>
        <authorList>
            <person name="Salinero K.K."/>
            <person name="Keller K."/>
            <person name="Feil W.S."/>
            <person name="Feil H."/>
            <person name="Trong S."/>
            <person name="Di Bartolo G."/>
            <person name="Lapidus A."/>
        </authorList>
    </citation>
    <scope>NUCLEOTIDE SEQUENCE [LARGE SCALE GENOMIC DNA]</scope>
    <source>
        <strain>RCB</strain>
    </source>
</reference>
<sequence length="101" mass="11650">MAKLALINREEKRRKLVAQYAKKRAALEAIITNVSLSDEERYEARLKMQALPRNSSPSRLRNRCQLTGRPRGVFRKFGLCRHKIRELAFNGEVPGVVKASW</sequence>
<dbReference type="EMBL" id="CP000089">
    <property type="protein sequence ID" value="AAZ45091.1"/>
    <property type="molecule type" value="Genomic_DNA"/>
</dbReference>
<dbReference type="SMR" id="Q47J90"/>
<dbReference type="STRING" id="159087.Daro_0332"/>
<dbReference type="KEGG" id="dar:Daro_0332"/>
<dbReference type="eggNOG" id="COG0199">
    <property type="taxonomic scope" value="Bacteria"/>
</dbReference>
<dbReference type="HOGENOM" id="CLU_139869_0_1_4"/>
<dbReference type="OrthoDB" id="9810484at2"/>
<dbReference type="GO" id="GO:0005737">
    <property type="term" value="C:cytoplasm"/>
    <property type="evidence" value="ECO:0007669"/>
    <property type="project" value="UniProtKB-ARBA"/>
</dbReference>
<dbReference type="GO" id="GO:0015935">
    <property type="term" value="C:small ribosomal subunit"/>
    <property type="evidence" value="ECO:0007669"/>
    <property type="project" value="TreeGrafter"/>
</dbReference>
<dbReference type="GO" id="GO:0019843">
    <property type="term" value="F:rRNA binding"/>
    <property type="evidence" value="ECO:0007669"/>
    <property type="project" value="UniProtKB-UniRule"/>
</dbReference>
<dbReference type="GO" id="GO:0003735">
    <property type="term" value="F:structural constituent of ribosome"/>
    <property type="evidence" value="ECO:0007669"/>
    <property type="project" value="InterPro"/>
</dbReference>
<dbReference type="GO" id="GO:0006412">
    <property type="term" value="P:translation"/>
    <property type="evidence" value="ECO:0007669"/>
    <property type="project" value="UniProtKB-UniRule"/>
</dbReference>
<dbReference type="FunFam" id="1.10.287.1480:FF:000001">
    <property type="entry name" value="30S ribosomal protein S14"/>
    <property type="match status" value="1"/>
</dbReference>
<dbReference type="Gene3D" id="1.10.287.1480">
    <property type="match status" value="1"/>
</dbReference>
<dbReference type="HAMAP" id="MF_00537">
    <property type="entry name" value="Ribosomal_uS14_1"/>
    <property type="match status" value="1"/>
</dbReference>
<dbReference type="InterPro" id="IPR001209">
    <property type="entry name" value="Ribosomal_uS14"/>
</dbReference>
<dbReference type="InterPro" id="IPR023036">
    <property type="entry name" value="Ribosomal_uS14_bac/plastid"/>
</dbReference>
<dbReference type="InterPro" id="IPR018271">
    <property type="entry name" value="Ribosomal_uS14_CS"/>
</dbReference>
<dbReference type="NCBIfam" id="NF006477">
    <property type="entry name" value="PRK08881.1"/>
    <property type="match status" value="1"/>
</dbReference>
<dbReference type="PANTHER" id="PTHR19836">
    <property type="entry name" value="30S RIBOSOMAL PROTEIN S14"/>
    <property type="match status" value="1"/>
</dbReference>
<dbReference type="PANTHER" id="PTHR19836:SF19">
    <property type="entry name" value="SMALL RIBOSOMAL SUBUNIT PROTEIN US14M"/>
    <property type="match status" value="1"/>
</dbReference>
<dbReference type="Pfam" id="PF00253">
    <property type="entry name" value="Ribosomal_S14"/>
    <property type="match status" value="1"/>
</dbReference>
<dbReference type="SUPFAM" id="SSF57716">
    <property type="entry name" value="Glucocorticoid receptor-like (DNA-binding domain)"/>
    <property type="match status" value="1"/>
</dbReference>
<dbReference type="PROSITE" id="PS00527">
    <property type="entry name" value="RIBOSOMAL_S14"/>
    <property type="match status" value="1"/>
</dbReference>
<proteinExistence type="inferred from homology"/>
<name>RS14_DECAR</name>